<keyword id="KW-0066">ATP synthesis</keyword>
<keyword id="KW-0067">ATP-binding</keyword>
<keyword id="KW-0139">CF(1)</keyword>
<keyword id="KW-0375">Hydrogen ion transport</keyword>
<keyword id="KW-0406">Ion transport</keyword>
<keyword id="KW-0472">Membrane</keyword>
<keyword id="KW-0496">Mitochondrion</keyword>
<keyword id="KW-0999">Mitochondrion inner membrane</keyword>
<keyword id="KW-0547">Nucleotide-binding</keyword>
<keyword id="KW-0813">Transport</keyword>
<reference key="1">
    <citation type="journal article" date="1985" name="Plant Physiol.">
        <title>Nucleotide sequence of the F1-ATPase alpha subunit from maize mitochondria.</title>
        <authorList>
            <person name="Braun C.J."/>
            <person name="Levings C.S. III"/>
        </authorList>
    </citation>
    <scope>NUCLEOTIDE SEQUENCE [GENOMIC DNA]</scope>
</reference>
<reference key="2">
    <citation type="journal article" date="1985" name="Curr. Genet.">
        <title>The mitochondrial genome of fertile maize (Zea mays L.) contains two copies of the gene encoding the alpha-subunit of the F1-ATPase.</title>
        <authorList>
            <person name="Isaac P.G."/>
            <person name="Brennicke A."/>
            <person name="Dunbar S.M."/>
            <person name="Leaver C.J."/>
        </authorList>
    </citation>
    <scope>NUCLEOTIDE SEQUENCE [GENOMIC DNA]</scope>
</reference>
<feature type="chain" id="PRO_0000144400" description="ATP synthase subunit alpha, mitochondrial">
    <location>
        <begin position="1"/>
        <end position="508"/>
    </location>
</feature>
<feature type="binding site" evidence="1">
    <location>
        <begin position="171"/>
        <end position="178"/>
    </location>
    <ligand>
        <name>ATP</name>
        <dbReference type="ChEBI" id="CHEBI:30616"/>
    </ligand>
</feature>
<feature type="site" description="Required for activity" evidence="1">
    <location>
        <position position="373"/>
    </location>
</feature>
<evidence type="ECO:0000250" key="1"/>
<evidence type="ECO:0000305" key="2"/>
<name>ATPAM_MAIZE</name>
<gene>
    <name type="primary">ATPA</name>
</gene>
<sequence>MEFSPRAAELTTLLESRMINFYTNLKVDEIGRVVSVGDGIARVYGLNEIQAGEMVEFASGVKGIALNLENENVGIVVFGSDTAIKEGDLVKRTGSIVDVPAGKAMLGRVVDALGVPIDGKGALSDHERRRVEVKAPGIIERKSVHEPMQTGLKAVDSLVPIGRGQRELIIGDRQTGKTAIAIDTILNQKQMNSRGTNESETLYCVYVAIGQKRSTVAQLVQILSEANALEYSMLVAATASDPAPLQFLAPYSGCAMGEYFRDNGMHALIIYDDLSKQAVAYRQMSLLLRRPPGREAFPGDVFYLHSRLLERAAKRSDQTGAGSLTALPVIETQAGDVSAYIPTNVISITDGQICLETELFYRGIRPAINVGLSVSRVGSAAQLKAMKQVCGSSKLELAQYREVAAFAQFGSDLDAATQALLNRGARLTEVPKQPQYEPLPIEKQIVVIYAAVNGFCDRMPLDRISQYEKNILSTINPELLKSFLEKGGLTNERKMEPDASLKESALNL</sequence>
<comment type="function">
    <text evidence="1">Mitochondrial membrane ATP synthase (F(1)F(0) ATP synthase or Complex V) produces ATP from ADP in the presence of a proton gradient across the membrane which is generated by electron transport complexes of the respiratory chain. F-type ATPases consist of two structural domains, F(1) - containing the extramembraneous catalytic core, and F(0) - containing the membrane proton channel, linked together by a central stalk and a peripheral stalk. During catalysis, ATP synthesis in the catalytic domain of F(1) is coupled via a rotary mechanism of the central stalk subunits to proton translocation. Subunits alpha and beta form the catalytic core in F(1). Rotation of the central stalk against the surrounding alpha(3)beta(3) subunits leads to hydrolysis of ATP in three separate catalytic sites on the beta subunits. Subunit alpha does not bear the catalytic high-affinity ATP-binding sites (By similarity).</text>
</comment>
<comment type="subunit">
    <text>F-type ATPases have 2 components, CF(1) - the catalytic core - and CF(0) - the membrane proton channel. CF(1) has five subunits: alpha(3), beta(3), gamma(1), delta(1), epsilon(1). CF(0) has three main subunits: a, b and c.</text>
</comment>
<comment type="subcellular location">
    <subcellularLocation>
        <location>Mitochondrion</location>
    </subcellularLocation>
    <subcellularLocation>
        <location>Mitochondrion inner membrane</location>
    </subcellularLocation>
    <text>Peripheral membrane protein.</text>
</comment>
<comment type="similarity">
    <text evidence="2">Belongs to the ATPase alpha/beta chains family.</text>
</comment>
<proteinExistence type="inferred from homology"/>
<accession>P05494</accession>
<organism>
    <name type="scientific">Zea mays</name>
    <name type="common">Maize</name>
    <dbReference type="NCBI Taxonomy" id="4577"/>
    <lineage>
        <taxon>Eukaryota</taxon>
        <taxon>Viridiplantae</taxon>
        <taxon>Streptophyta</taxon>
        <taxon>Embryophyta</taxon>
        <taxon>Tracheophyta</taxon>
        <taxon>Spermatophyta</taxon>
        <taxon>Magnoliopsida</taxon>
        <taxon>Liliopsida</taxon>
        <taxon>Poales</taxon>
        <taxon>Poaceae</taxon>
        <taxon>PACMAD clade</taxon>
        <taxon>Panicoideae</taxon>
        <taxon>Andropogonodae</taxon>
        <taxon>Andropogoneae</taxon>
        <taxon>Tripsacinae</taxon>
        <taxon>Zea</taxon>
    </lineage>
</organism>
<protein>
    <recommendedName>
        <fullName>ATP synthase subunit alpha, mitochondrial</fullName>
    </recommendedName>
</protein>
<dbReference type="EMBL" id="M16222">
    <property type="protein sequence ID" value="AAA70269.1"/>
    <property type="molecule type" value="Genomic_DNA"/>
</dbReference>
<dbReference type="EMBL" id="Z00026">
    <property type="protein sequence ID" value="CAA77319.1"/>
    <property type="molecule type" value="Genomic_DNA"/>
</dbReference>
<dbReference type="PIR" id="A23757">
    <property type="entry name" value="PWZMAM"/>
</dbReference>
<dbReference type="SMR" id="P05494"/>
<dbReference type="EnsemblPlants" id="Zm00001eb434640_T001">
    <property type="protein sequence ID" value="Zm00001eb434640_P001"/>
    <property type="gene ID" value="Zm00001eb434640"/>
</dbReference>
<dbReference type="EnsemblPlants" id="Zm00001eb437040_T001">
    <property type="protein sequence ID" value="Zm00001eb437040_P001"/>
    <property type="gene ID" value="Zm00001eb437040"/>
</dbReference>
<dbReference type="EnsemblPlants" id="Zm00001eb442780_T001">
    <property type="protein sequence ID" value="Zm00001eb442780_P001"/>
    <property type="gene ID" value="Zm00001eb442780"/>
</dbReference>
<dbReference type="Gramene" id="Zm00001eb434640_T001">
    <property type="protein sequence ID" value="Zm00001eb434640_P001"/>
    <property type="gene ID" value="Zm00001eb434640"/>
</dbReference>
<dbReference type="Gramene" id="Zm00001eb437040_T001">
    <property type="protein sequence ID" value="Zm00001eb437040_P001"/>
    <property type="gene ID" value="Zm00001eb437040"/>
</dbReference>
<dbReference type="Gramene" id="Zm00001eb442780_T001">
    <property type="protein sequence ID" value="Zm00001eb442780_P001"/>
    <property type="gene ID" value="Zm00001eb442780"/>
</dbReference>
<dbReference type="MaizeGDB" id="69198"/>
<dbReference type="OMA" id="INQRDNW"/>
<dbReference type="OrthoDB" id="592447at2759"/>
<dbReference type="ExpressionAtlas" id="P05494">
    <property type="expression patterns" value="baseline"/>
</dbReference>
<dbReference type="GO" id="GO:0005743">
    <property type="term" value="C:mitochondrial inner membrane"/>
    <property type="evidence" value="ECO:0007669"/>
    <property type="project" value="UniProtKB-SubCell"/>
</dbReference>
<dbReference type="GO" id="GO:0031966">
    <property type="term" value="C:mitochondrial membrane"/>
    <property type="evidence" value="ECO:0000314"/>
    <property type="project" value="AgBase"/>
</dbReference>
<dbReference type="GO" id="GO:0045259">
    <property type="term" value="C:proton-transporting ATP synthase complex"/>
    <property type="evidence" value="ECO:0007669"/>
    <property type="project" value="UniProtKB-KW"/>
</dbReference>
<dbReference type="GO" id="GO:0043531">
    <property type="term" value="F:ADP binding"/>
    <property type="evidence" value="ECO:0000318"/>
    <property type="project" value="GO_Central"/>
</dbReference>
<dbReference type="GO" id="GO:0005524">
    <property type="term" value="F:ATP binding"/>
    <property type="evidence" value="ECO:0000318"/>
    <property type="project" value="GO_Central"/>
</dbReference>
<dbReference type="GO" id="GO:0051087">
    <property type="term" value="F:protein-folding chaperone binding"/>
    <property type="evidence" value="ECO:0000353"/>
    <property type="project" value="AgBase"/>
</dbReference>
<dbReference type="GO" id="GO:0046933">
    <property type="term" value="F:proton-transporting ATP synthase activity, rotational mechanism"/>
    <property type="evidence" value="ECO:0007669"/>
    <property type="project" value="InterPro"/>
</dbReference>
<dbReference type="GO" id="GO:0015986">
    <property type="term" value="P:proton motive force-driven ATP synthesis"/>
    <property type="evidence" value="ECO:0000318"/>
    <property type="project" value="GO_Central"/>
</dbReference>
<dbReference type="CDD" id="cd18113">
    <property type="entry name" value="ATP-synt_F1_alpha_C"/>
    <property type="match status" value="1"/>
</dbReference>
<dbReference type="CDD" id="cd18116">
    <property type="entry name" value="ATP-synt_F1_alpha_N"/>
    <property type="match status" value="1"/>
</dbReference>
<dbReference type="CDD" id="cd01132">
    <property type="entry name" value="F1-ATPase_alpha_CD"/>
    <property type="match status" value="1"/>
</dbReference>
<dbReference type="FunFam" id="1.20.150.20:FF:000001">
    <property type="entry name" value="ATP synthase subunit alpha"/>
    <property type="match status" value="1"/>
</dbReference>
<dbReference type="FunFam" id="2.40.30.20:FF:000001">
    <property type="entry name" value="ATP synthase subunit alpha"/>
    <property type="match status" value="1"/>
</dbReference>
<dbReference type="FunFam" id="3.40.50.300:FF:002432">
    <property type="entry name" value="ATP synthase subunit alpha, mitochondrial"/>
    <property type="match status" value="1"/>
</dbReference>
<dbReference type="Gene3D" id="2.40.30.20">
    <property type="match status" value="1"/>
</dbReference>
<dbReference type="Gene3D" id="1.20.150.20">
    <property type="entry name" value="ATP synthase alpha/beta chain, C-terminal domain"/>
    <property type="match status" value="1"/>
</dbReference>
<dbReference type="Gene3D" id="3.40.50.300">
    <property type="entry name" value="P-loop containing nucleotide triphosphate hydrolases"/>
    <property type="match status" value="1"/>
</dbReference>
<dbReference type="HAMAP" id="MF_01346">
    <property type="entry name" value="ATP_synth_alpha_bact"/>
    <property type="match status" value="1"/>
</dbReference>
<dbReference type="InterPro" id="IPR023366">
    <property type="entry name" value="ATP_synth_asu-like_sf"/>
</dbReference>
<dbReference type="InterPro" id="IPR000793">
    <property type="entry name" value="ATP_synth_asu_C"/>
</dbReference>
<dbReference type="InterPro" id="IPR038376">
    <property type="entry name" value="ATP_synth_asu_C_sf"/>
</dbReference>
<dbReference type="InterPro" id="IPR033732">
    <property type="entry name" value="ATP_synth_F1_a_nt-bd_dom"/>
</dbReference>
<dbReference type="InterPro" id="IPR005294">
    <property type="entry name" value="ATP_synth_F1_asu"/>
</dbReference>
<dbReference type="InterPro" id="IPR020003">
    <property type="entry name" value="ATPase_a/bsu_AS"/>
</dbReference>
<dbReference type="InterPro" id="IPR004100">
    <property type="entry name" value="ATPase_F1/V1/A1_a/bsu_N"/>
</dbReference>
<dbReference type="InterPro" id="IPR036121">
    <property type="entry name" value="ATPase_F1/V1/A1_a/bsu_N_sf"/>
</dbReference>
<dbReference type="InterPro" id="IPR000194">
    <property type="entry name" value="ATPase_F1/V1/A1_a/bsu_nucl-bd"/>
</dbReference>
<dbReference type="InterPro" id="IPR027417">
    <property type="entry name" value="P-loop_NTPase"/>
</dbReference>
<dbReference type="NCBIfam" id="TIGR00962">
    <property type="entry name" value="atpA"/>
    <property type="match status" value="1"/>
</dbReference>
<dbReference type="NCBIfam" id="NF009884">
    <property type="entry name" value="PRK13343.1"/>
    <property type="match status" value="1"/>
</dbReference>
<dbReference type="PANTHER" id="PTHR48082">
    <property type="entry name" value="ATP SYNTHASE SUBUNIT ALPHA, MITOCHONDRIAL"/>
    <property type="match status" value="1"/>
</dbReference>
<dbReference type="PANTHER" id="PTHR48082:SF2">
    <property type="entry name" value="ATP SYNTHASE SUBUNIT ALPHA, MITOCHONDRIAL"/>
    <property type="match status" value="1"/>
</dbReference>
<dbReference type="Pfam" id="PF00006">
    <property type="entry name" value="ATP-synt_ab"/>
    <property type="match status" value="1"/>
</dbReference>
<dbReference type="Pfam" id="PF00306">
    <property type="entry name" value="ATP-synt_ab_C"/>
    <property type="match status" value="1"/>
</dbReference>
<dbReference type="Pfam" id="PF02874">
    <property type="entry name" value="ATP-synt_ab_N"/>
    <property type="match status" value="1"/>
</dbReference>
<dbReference type="PIRSF" id="PIRSF039088">
    <property type="entry name" value="F_ATPase_subunit_alpha"/>
    <property type="match status" value="1"/>
</dbReference>
<dbReference type="SUPFAM" id="SSF47917">
    <property type="entry name" value="C-terminal domain of alpha and beta subunits of F1 ATP synthase"/>
    <property type="match status" value="1"/>
</dbReference>
<dbReference type="SUPFAM" id="SSF50615">
    <property type="entry name" value="N-terminal domain of alpha and beta subunits of F1 ATP synthase"/>
    <property type="match status" value="1"/>
</dbReference>
<dbReference type="SUPFAM" id="SSF52540">
    <property type="entry name" value="P-loop containing nucleoside triphosphate hydrolases"/>
    <property type="match status" value="1"/>
</dbReference>
<dbReference type="PROSITE" id="PS00152">
    <property type="entry name" value="ATPASE_ALPHA_BETA"/>
    <property type="match status" value="1"/>
</dbReference>
<geneLocation type="mitochondrion"/>